<keyword id="KW-1003">Cell membrane</keyword>
<keyword id="KW-0297">G-protein coupled receptor</keyword>
<keyword id="KW-0325">Glycoprotein</keyword>
<keyword id="KW-0472">Membrane</keyword>
<keyword id="KW-0675">Receptor</keyword>
<keyword id="KW-0807">Transducer</keyword>
<keyword id="KW-0812">Transmembrane</keyword>
<keyword id="KW-1133">Transmembrane helix</keyword>
<name>MSHR_HAPGR</name>
<comment type="function">
    <text evidence="1">Receptor for MSH (alpha, beta and gamma) and ACTH. The activity of this receptor is mediated by G proteins which activate adenylate cyclase. Mediates melanogenesis, the production of eumelanin (black/brown) and phaeomelanin (red/yellow), via regulation of cAMP signaling in melanocytes.</text>
</comment>
<comment type="subunit">
    <text evidence="1">Interacts with MGRN1, but does not undergo MGRN1-mediated ubiquitination; this interaction competes with GNAS-binding and thus inhibits agonist-induced cAMP production. Interacts with OPN3; the interaction results in a decrease in MC1R-mediated cAMP signaling and ultimately a decrease in melanin production in melanocytes.</text>
</comment>
<comment type="subcellular location">
    <subcellularLocation>
        <location evidence="1">Cell membrane</location>
        <topology evidence="2">Multi-pass membrane protein</topology>
    </subcellularLocation>
</comment>
<comment type="similarity">
    <text evidence="3">Belongs to the G-protein coupled receptor 1 family.</text>
</comment>
<protein>
    <recommendedName>
        <fullName>Melanocyte-stimulating hormone receptor</fullName>
        <shortName>MSH-R</shortName>
    </recommendedName>
    <alternativeName>
        <fullName>Melanocortin receptor 1</fullName>
        <shortName>MC1-R</shortName>
    </alternativeName>
</protein>
<accession>Q864F5</accession>
<feature type="chain" id="PRO_0000069815" description="Melanocyte-stimulating hormone receptor">
    <location>
        <begin position="1"/>
        <end position="317"/>
    </location>
</feature>
<feature type="topological domain" description="Extracellular" evidence="2">
    <location>
        <begin position="1"/>
        <end position="37"/>
    </location>
</feature>
<feature type="transmembrane region" description="Helical; Name=1" evidence="2">
    <location>
        <begin position="38"/>
        <end position="63"/>
    </location>
</feature>
<feature type="topological domain" description="Cytoplasmic" evidence="2">
    <location>
        <begin position="64"/>
        <end position="72"/>
    </location>
</feature>
<feature type="transmembrane region" description="Helical; Name=2" evidence="2">
    <location>
        <begin position="73"/>
        <end position="93"/>
    </location>
</feature>
<feature type="topological domain" description="Extracellular" evidence="2">
    <location>
        <begin position="94"/>
        <end position="118"/>
    </location>
</feature>
<feature type="transmembrane region" description="Helical; Name=3" evidence="2">
    <location>
        <begin position="119"/>
        <end position="140"/>
    </location>
</feature>
<feature type="topological domain" description="Cytoplasmic" evidence="2">
    <location>
        <begin position="141"/>
        <end position="163"/>
    </location>
</feature>
<feature type="transmembrane region" description="Helical; Name=4" evidence="2">
    <location>
        <begin position="164"/>
        <end position="183"/>
    </location>
</feature>
<feature type="topological domain" description="Extracellular" evidence="2">
    <location>
        <begin position="184"/>
        <end position="191"/>
    </location>
</feature>
<feature type="transmembrane region" description="Helical; Name=5" evidence="2">
    <location>
        <begin position="192"/>
        <end position="211"/>
    </location>
</feature>
<feature type="topological domain" description="Cytoplasmic" evidence="2">
    <location>
        <begin position="212"/>
        <end position="240"/>
    </location>
</feature>
<feature type="transmembrane region" description="Helical; Name=6" evidence="2">
    <location>
        <begin position="241"/>
        <end position="266"/>
    </location>
</feature>
<feature type="topological domain" description="Extracellular" evidence="2">
    <location>
        <begin position="267"/>
        <end position="279"/>
    </location>
</feature>
<feature type="transmembrane region" description="Helical; Name=7" evidence="2">
    <location>
        <begin position="280"/>
        <end position="300"/>
    </location>
</feature>
<feature type="topological domain" description="Cytoplasmic" evidence="2">
    <location>
        <begin position="301"/>
        <end position="317"/>
    </location>
</feature>
<feature type="region of interest" description="Disordered" evidence="4">
    <location>
        <begin position="1"/>
        <end position="26"/>
    </location>
</feature>
<feature type="glycosylation site" description="N-linked (GlcNAc...) asparagine" evidence="2">
    <location>
        <position position="29"/>
    </location>
</feature>
<organism>
    <name type="scientific">Hapalemur griseus</name>
    <name type="common">Gray gentle lemur</name>
    <name type="synonym">Eastern lesser bamboo lemur</name>
    <dbReference type="NCBI Taxonomy" id="13557"/>
    <lineage>
        <taxon>Eukaryota</taxon>
        <taxon>Metazoa</taxon>
        <taxon>Chordata</taxon>
        <taxon>Craniata</taxon>
        <taxon>Vertebrata</taxon>
        <taxon>Euteleostomi</taxon>
        <taxon>Mammalia</taxon>
        <taxon>Eutheria</taxon>
        <taxon>Euarchontoglires</taxon>
        <taxon>Primates</taxon>
        <taxon>Strepsirrhini</taxon>
        <taxon>Lemuriformes</taxon>
        <taxon>Lemuridae</taxon>
        <taxon>Hapalemur</taxon>
    </lineage>
</organism>
<evidence type="ECO:0000250" key="1">
    <source>
        <dbReference type="UniProtKB" id="Q01726"/>
    </source>
</evidence>
<evidence type="ECO:0000255" key="2"/>
<evidence type="ECO:0000255" key="3">
    <source>
        <dbReference type="PROSITE-ProRule" id="PRU00521"/>
    </source>
</evidence>
<evidence type="ECO:0000256" key="4">
    <source>
        <dbReference type="SAM" id="MobiDB-lite"/>
    </source>
</evidence>
<gene>
    <name type="primary">MC1R</name>
</gene>
<sequence>MPVQGSPRSLLGAVNSTPTATPHLRPAANQTGPQCLEVSIPDGLFLCLGLVSLVENTLVVAAIAKNRNLHSPMYCFVCCLALSDLLVSVSSVLETAVLLLLGAGALAAQATVVQLLGNVIDVLLCSSMVSSLFFLGAIAMDRYISIFYALRYHSIVTLARARRAIAAIWAASMLSSTLFIAYCDHTAALLCLVVFFLAMLVLMAVLYVHMLTQACQHAQGIARLHKRQRPVQQGWGLKGAATLAILLGVFFLCWGPFFLHLTLIAVCPQHPTCSCIFKNFRLFLALIVCNAIVDPLIYAFRSQELCKTLKELLLFSW</sequence>
<reference key="1">
    <citation type="journal article" date="2003" name="Am. J. Phys. Anthropol.">
        <title>Evolution of a pigmentation gene, the melanocortin-1 receptor, in primates.</title>
        <authorList>
            <person name="Mundy N.I."/>
            <person name="Kelly J."/>
        </authorList>
    </citation>
    <scope>NUCLEOTIDE SEQUENCE [GENOMIC DNA]</scope>
    <source>
        <strain>Isolate 1</strain>
    </source>
</reference>
<dbReference type="EMBL" id="AY205142">
    <property type="protein sequence ID" value="AAP31016.1"/>
    <property type="molecule type" value="Genomic_DNA"/>
</dbReference>
<dbReference type="SMR" id="Q864F5"/>
<dbReference type="GlyCosmos" id="Q864F5">
    <property type="glycosylation" value="1 site, No reported glycans"/>
</dbReference>
<dbReference type="GO" id="GO:0005886">
    <property type="term" value="C:plasma membrane"/>
    <property type="evidence" value="ECO:0000250"/>
    <property type="project" value="UniProtKB"/>
</dbReference>
<dbReference type="GO" id="GO:0004980">
    <property type="term" value="F:melanocyte-stimulating hormone receptor activity"/>
    <property type="evidence" value="ECO:0007669"/>
    <property type="project" value="InterPro"/>
</dbReference>
<dbReference type="GO" id="GO:0007189">
    <property type="term" value="P:adenylate cyclase-activating G protein-coupled receptor signaling pathway"/>
    <property type="evidence" value="ECO:0007669"/>
    <property type="project" value="UniProtKB-ARBA"/>
</dbReference>
<dbReference type="FunFam" id="1.20.1070.10:FF:000211">
    <property type="entry name" value="Melanocyte-stimulating hormone receptor"/>
    <property type="match status" value="1"/>
</dbReference>
<dbReference type="Gene3D" id="1.20.1070.10">
    <property type="entry name" value="Rhodopsin 7-helix transmembrane proteins"/>
    <property type="match status" value="1"/>
</dbReference>
<dbReference type="InterPro" id="IPR000276">
    <property type="entry name" value="GPCR_Rhodpsn"/>
</dbReference>
<dbReference type="InterPro" id="IPR017452">
    <property type="entry name" value="GPCR_Rhodpsn_7TM"/>
</dbReference>
<dbReference type="InterPro" id="IPR001671">
    <property type="entry name" value="Melcrt_ACTH_rcpt"/>
</dbReference>
<dbReference type="InterPro" id="IPR000761">
    <property type="entry name" value="MSH_rcpt"/>
</dbReference>
<dbReference type="PANTHER" id="PTHR22750">
    <property type="entry name" value="G-PROTEIN COUPLED RECEPTOR"/>
    <property type="match status" value="1"/>
</dbReference>
<dbReference type="Pfam" id="PF00001">
    <property type="entry name" value="7tm_1"/>
    <property type="match status" value="2"/>
</dbReference>
<dbReference type="PRINTS" id="PR00237">
    <property type="entry name" value="GPCRRHODOPSN"/>
</dbReference>
<dbReference type="PRINTS" id="PR00534">
    <property type="entry name" value="MCRFAMILY"/>
</dbReference>
<dbReference type="PRINTS" id="PR00536">
    <property type="entry name" value="MELNOCYTESHR"/>
</dbReference>
<dbReference type="SMART" id="SM01381">
    <property type="entry name" value="7TM_GPCR_Srsx"/>
    <property type="match status" value="1"/>
</dbReference>
<dbReference type="SUPFAM" id="SSF81321">
    <property type="entry name" value="Family A G protein-coupled receptor-like"/>
    <property type="match status" value="1"/>
</dbReference>
<dbReference type="PROSITE" id="PS00237">
    <property type="entry name" value="G_PROTEIN_RECEP_F1_1"/>
    <property type="match status" value="1"/>
</dbReference>
<dbReference type="PROSITE" id="PS50262">
    <property type="entry name" value="G_PROTEIN_RECEP_F1_2"/>
    <property type="match status" value="1"/>
</dbReference>
<proteinExistence type="inferred from homology"/>